<dbReference type="EMBL" id="CP000046">
    <property type="protein sequence ID" value="AAW36641.1"/>
    <property type="molecule type" value="Genomic_DNA"/>
</dbReference>
<dbReference type="RefSeq" id="WP_000505015.1">
    <property type="nucleotide sequence ID" value="NZ_JBGOFO010000003.1"/>
</dbReference>
<dbReference type="SMR" id="Q5HG62"/>
<dbReference type="KEGG" id="sac:SACOL1393"/>
<dbReference type="HOGENOM" id="CLU_078802_0_0_9"/>
<dbReference type="Proteomes" id="UP000000530">
    <property type="component" value="Chromosome"/>
</dbReference>
<dbReference type="GO" id="GO:0003723">
    <property type="term" value="F:RNA binding"/>
    <property type="evidence" value="ECO:0007669"/>
    <property type="project" value="InterPro"/>
</dbReference>
<dbReference type="GO" id="GO:0045893">
    <property type="term" value="P:positive regulation of DNA-templated transcription"/>
    <property type="evidence" value="ECO:0007669"/>
    <property type="project" value="InterPro"/>
</dbReference>
<dbReference type="Gene3D" id="1.20.58.1950">
    <property type="match status" value="1"/>
</dbReference>
<dbReference type="Gene3D" id="1.20.890.100">
    <property type="match status" value="1"/>
</dbReference>
<dbReference type="Gene3D" id="2.30.24.10">
    <property type="entry name" value="CAT RNA-binding domain"/>
    <property type="match status" value="1"/>
</dbReference>
<dbReference type="Gene3D" id="1.10.1790.10">
    <property type="entry name" value="PRD domain"/>
    <property type="match status" value="1"/>
</dbReference>
<dbReference type="InterPro" id="IPR050661">
    <property type="entry name" value="BglG_antiterminators"/>
</dbReference>
<dbReference type="InterPro" id="IPR004341">
    <property type="entry name" value="CAT_RNA-bd_dom"/>
</dbReference>
<dbReference type="InterPro" id="IPR036650">
    <property type="entry name" value="CAT_RNA-bd_dom_sf"/>
</dbReference>
<dbReference type="InterPro" id="IPR011608">
    <property type="entry name" value="PRD"/>
</dbReference>
<dbReference type="InterPro" id="IPR036634">
    <property type="entry name" value="PRD_sf"/>
</dbReference>
<dbReference type="InterPro" id="IPR001550">
    <property type="entry name" value="Transcrpt_antitermin_CS"/>
</dbReference>
<dbReference type="NCBIfam" id="NF047357">
    <property type="entry name" value="antiterm_GlcT"/>
    <property type="match status" value="1"/>
</dbReference>
<dbReference type="PANTHER" id="PTHR30185">
    <property type="entry name" value="CRYPTIC BETA-GLUCOSIDE BGL OPERON ANTITERMINATOR"/>
    <property type="match status" value="1"/>
</dbReference>
<dbReference type="PANTHER" id="PTHR30185:SF16">
    <property type="entry name" value="PROTEIN GLCT"/>
    <property type="match status" value="1"/>
</dbReference>
<dbReference type="Pfam" id="PF03123">
    <property type="entry name" value="CAT_RBD"/>
    <property type="match status" value="1"/>
</dbReference>
<dbReference type="Pfam" id="PF00874">
    <property type="entry name" value="PRD"/>
    <property type="match status" value="2"/>
</dbReference>
<dbReference type="SMART" id="SM01061">
    <property type="entry name" value="CAT_RBD"/>
    <property type="match status" value="1"/>
</dbReference>
<dbReference type="SUPFAM" id="SSF63520">
    <property type="entry name" value="PTS-regulatory domain, PRD"/>
    <property type="match status" value="2"/>
</dbReference>
<dbReference type="SUPFAM" id="SSF50151">
    <property type="entry name" value="SacY-like RNA-binding domain"/>
    <property type="match status" value="1"/>
</dbReference>
<dbReference type="PROSITE" id="PS00654">
    <property type="entry name" value="PRD_1"/>
    <property type="match status" value="1"/>
</dbReference>
<dbReference type="PROSITE" id="PS51372">
    <property type="entry name" value="PRD_2"/>
    <property type="match status" value="2"/>
</dbReference>
<accession>Q5HG62</accession>
<comment type="similarity">
    <text evidence="2">Belongs to the transcriptional antiterminator BglG family. GlcT subfamily.</text>
</comment>
<proteinExistence type="inferred from homology"/>
<organism>
    <name type="scientific">Staphylococcus aureus (strain COL)</name>
    <dbReference type="NCBI Taxonomy" id="93062"/>
    <lineage>
        <taxon>Bacteria</taxon>
        <taxon>Bacillati</taxon>
        <taxon>Bacillota</taxon>
        <taxon>Bacilli</taxon>
        <taxon>Bacillales</taxon>
        <taxon>Staphylococcaceae</taxon>
        <taxon>Staphylococcus</taxon>
    </lineage>
</organism>
<reference key="1">
    <citation type="journal article" date="2005" name="J. Bacteriol.">
        <title>Insights on evolution of virulence and resistance from the complete genome analysis of an early methicillin-resistant Staphylococcus aureus strain and a biofilm-producing methicillin-resistant Staphylococcus epidermidis strain.</title>
        <authorList>
            <person name="Gill S.R."/>
            <person name="Fouts D.E."/>
            <person name="Archer G.L."/>
            <person name="Mongodin E.F."/>
            <person name="DeBoy R.T."/>
            <person name="Ravel J."/>
            <person name="Paulsen I.T."/>
            <person name="Kolonay J.F."/>
            <person name="Brinkac L.M."/>
            <person name="Beanan M.J."/>
            <person name="Dodson R.J."/>
            <person name="Daugherty S.C."/>
            <person name="Madupu R."/>
            <person name="Angiuoli S.V."/>
            <person name="Durkin A.S."/>
            <person name="Haft D.H."/>
            <person name="Vamathevan J.J."/>
            <person name="Khouri H."/>
            <person name="Utterback T.R."/>
            <person name="Lee C."/>
            <person name="Dimitrov G."/>
            <person name="Jiang L."/>
            <person name="Qin H."/>
            <person name="Weidman J."/>
            <person name="Tran K."/>
            <person name="Kang K.H."/>
            <person name="Hance I.R."/>
            <person name="Nelson K.E."/>
            <person name="Fraser C.M."/>
        </authorList>
    </citation>
    <scope>NUCLEOTIDE SEQUENCE [LARGE SCALE GENOMIC DNA]</scope>
    <source>
        <strain>COL</strain>
    </source>
</reference>
<gene>
    <name type="primary">glcT</name>
    <name type="ordered locus">SACOL1393</name>
</gene>
<protein>
    <recommendedName>
        <fullName>Protein GlcT</fullName>
    </recommendedName>
</protein>
<sequence>MGEYIVTKTLNNNVVVCTNNDQEVILIGKGIGFNKKEGMALNDQTITIEKIYKLESEQQKAHYKSLVEIADDNVLQVIIDSLNFISNTAMNVDSKQLVVSLTDHIIFAYKRLKQNQVISNPFVMETMQLYSDAYHIAKQVIDQLNAALDVHFPEDEIGFIALHIASNTEDLSMHEMTLINNVIKKGIDIIESDLVTTVDKESLQYQRFIRHVQFLIRRLRRKEYIHAQDDFVSMIKNHYPICYNTAYKILTMIQKQFDVNISESEIIYLTLHIHHFEERINQS</sequence>
<evidence type="ECO:0000255" key="1">
    <source>
        <dbReference type="PROSITE-ProRule" id="PRU00704"/>
    </source>
</evidence>
<evidence type="ECO:0000305" key="2"/>
<feature type="chain" id="PRO_0000352606" description="Protein GlcT">
    <location>
        <begin position="1"/>
        <end position="283"/>
    </location>
</feature>
<feature type="domain" description="PRD 1" evidence="1">
    <location>
        <begin position="69"/>
        <end position="173"/>
    </location>
</feature>
<feature type="domain" description="PRD 2" evidence="1">
    <location>
        <begin position="174"/>
        <end position="283"/>
    </location>
</feature>
<keyword id="KW-0677">Repeat</keyword>
<name>GLCT_STAAC</name>